<gene>
    <name evidence="1" type="primary">cbbL1</name>
    <name type="ordered locus">RPD_1549</name>
</gene>
<proteinExistence type="inferred from homology"/>
<accession>Q37BZ5</accession>
<reference key="1">
    <citation type="submission" date="2006-03" db="EMBL/GenBank/DDBJ databases">
        <title>Complete sequence of Rhodopseudomonas palustris BisB5.</title>
        <authorList>
            <consortium name="US DOE Joint Genome Institute"/>
            <person name="Copeland A."/>
            <person name="Lucas S."/>
            <person name="Lapidus A."/>
            <person name="Barry K."/>
            <person name="Detter J.C."/>
            <person name="Glavina del Rio T."/>
            <person name="Hammon N."/>
            <person name="Israni S."/>
            <person name="Dalin E."/>
            <person name="Tice H."/>
            <person name="Pitluck S."/>
            <person name="Chain P."/>
            <person name="Malfatti S."/>
            <person name="Shin M."/>
            <person name="Vergez L."/>
            <person name="Schmutz J."/>
            <person name="Larimer F."/>
            <person name="Land M."/>
            <person name="Hauser L."/>
            <person name="Pelletier D.A."/>
            <person name="Kyrpides N."/>
            <person name="Lykidis A."/>
            <person name="Oda Y."/>
            <person name="Harwood C.S."/>
            <person name="Richardson P."/>
        </authorList>
    </citation>
    <scope>NUCLEOTIDE SEQUENCE [LARGE SCALE GENOMIC DNA]</scope>
    <source>
        <strain>BisB5</strain>
    </source>
</reference>
<keyword id="KW-0113">Calvin cycle</keyword>
<keyword id="KW-0120">Carbon dioxide fixation</keyword>
<keyword id="KW-0456">Lyase</keyword>
<keyword id="KW-0460">Magnesium</keyword>
<keyword id="KW-0479">Metal-binding</keyword>
<keyword id="KW-0503">Monooxygenase</keyword>
<keyword id="KW-0560">Oxidoreductase</keyword>
<keyword id="KW-0602">Photosynthesis</keyword>
<dbReference type="EC" id="4.1.1.39" evidence="1"/>
<dbReference type="EMBL" id="CP000283">
    <property type="protein sequence ID" value="ABE38786.1"/>
    <property type="molecule type" value="Genomic_DNA"/>
</dbReference>
<dbReference type="SMR" id="Q37BZ5"/>
<dbReference type="STRING" id="316057.RPD_1549"/>
<dbReference type="KEGG" id="rpd:RPD_1549"/>
<dbReference type="eggNOG" id="COG1850">
    <property type="taxonomic scope" value="Bacteria"/>
</dbReference>
<dbReference type="HOGENOM" id="CLU_031450_2_0_5"/>
<dbReference type="BioCyc" id="RPAL316057:RPD_RS07840-MONOMER"/>
<dbReference type="Proteomes" id="UP000001818">
    <property type="component" value="Chromosome"/>
</dbReference>
<dbReference type="GO" id="GO:0000287">
    <property type="term" value="F:magnesium ion binding"/>
    <property type="evidence" value="ECO:0007669"/>
    <property type="project" value="UniProtKB-UniRule"/>
</dbReference>
<dbReference type="GO" id="GO:0004497">
    <property type="term" value="F:monooxygenase activity"/>
    <property type="evidence" value="ECO:0007669"/>
    <property type="project" value="UniProtKB-KW"/>
</dbReference>
<dbReference type="GO" id="GO:0016984">
    <property type="term" value="F:ribulose-bisphosphate carboxylase activity"/>
    <property type="evidence" value="ECO:0007669"/>
    <property type="project" value="UniProtKB-UniRule"/>
</dbReference>
<dbReference type="GO" id="GO:0019253">
    <property type="term" value="P:reductive pentose-phosphate cycle"/>
    <property type="evidence" value="ECO:0007669"/>
    <property type="project" value="UniProtKB-UniRule"/>
</dbReference>
<dbReference type="Gene3D" id="3.20.20.110">
    <property type="entry name" value="Ribulose bisphosphate carboxylase, large subunit, C-terminal domain"/>
    <property type="match status" value="1"/>
</dbReference>
<dbReference type="Gene3D" id="3.30.70.150">
    <property type="entry name" value="RuBisCO large subunit, N-terminal domain"/>
    <property type="match status" value="1"/>
</dbReference>
<dbReference type="HAMAP" id="MF_01338">
    <property type="entry name" value="RuBisCO_L_type1"/>
    <property type="match status" value="1"/>
</dbReference>
<dbReference type="InterPro" id="IPR033966">
    <property type="entry name" value="RuBisCO"/>
</dbReference>
<dbReference type="InterPro" id="IPR020878">
    <property type="entry name" value="RuBisCo_large_chain_AS"/>
</dbReference>
<dbReference type="InterPro" id="IPR000685">
    <property type="entry name" value="RuBisCO_lsu_C"/>
</dbReference>
<dbReference type="InterPro" id="IPR036376">
    <property type="entry name" value="RuBisCO_lsu_C_sf"/>
</dbReference>
<dbReference type="InterPro" id="IPR017443">
    <property type="entry name" value="RuBisCO_lsu_fd_N"/>
</dbReference>
<dbReference type="InterPro" id="IPR036422">
    <property type="entry name" value="RuBisCO_lsu_N_sf"/>
</dbReference>
<dbReference type="InterPro" id="IPR020888">
    <property type="entry name" value="RuBisCO_lsuI"/>
</dbReference>
<dbReference type="NCBIfam" id="NF003252">
    <property type="entry name" value="PRK04208.1"/>
    <property type="match status" value="1"/>
</dbReference>
<dbReference type="PANTHER" id="PTHR42704">
    <property type="entry name" value="RIBULOSE BISPHOSPHATE CARBOXYLASE"/>
    <property type="match status" value="1"/>
</dbReference>
<dbReference type="PANTHER" id="PTHR42704:SF17">
    <property type="entry name" value="RIBULOSE BISPHOSPHATE CARBOXYLASE LARGE CHAIN"/>
    <property type="match status" value="1"/>
</dbReference>
<dbReference type="Pfam" id="PF00016">
    <property type="entry name" value="RuBisCO_large"/>
    <property type="match status" value="1"/>
</dbReference>
<dbReference type="Pfam" id="PF02788">
    <property type="entry name" value="RuBisCO_large_N"/>
    <property type="match status" value="1"/>
</dbReference>
<dbReference type="SFLD" id="SFLDG01052">
    <property type="entry name" value="RuBisCO"/>
    <property type="match status" value="1"/>
</dbReference>
<dbReference type="SFLD" id="SFLDS00014">
    <property type="entry name" value="RuBisCO"/>
    <property type="match status" value="1"/>
</dbReference>
<dbReference type="SFLD" id="SFLDG00301">
    <property type="entry name" value="RuBisCO-like_proteins"/>
    <property type="match status" value="1"/>
</dbReference>
<dbReference type="SUPFAM" id="SSF51649">
    <property type="entry name" value="RuBisCo, C-terminal domain"/>
    <property type="match status" value="1"/>
</dbReference>
<dbReference type="SUPFAM" id="SSF54966">
    <property type="entry name" value="RuBisCO, large subunit, small (N-terminal) domain"/>
    <property type="match status" value="1"/>
</dbReference>
<dbReference type="PROSITE" id="PS00157">
    <property type="entry name" value="RUBISCO_LARGE"/>
    <property type="match status" value="1"/>
</dbReference>
<feature type="chain" id="PRO_0000251458" description="Ribulose bisphosphate carboxylase large chain 1">
    <location>
        <begin position="1"/>
        <end position="472"/>
    </location>
</feature>
<feature type="active site" description="Proton acceptor" evidence="1">
    <location>
        <position position="167"/>
    </location>
</feature>
<feature type="active site" description="Proton acceptor" evidence="1">
    <location>
        <position position="286"/>
    </location>
</feature>
<feature type="binding site" description="in homodimeric partner" evidence="1">
    <location>
        <position position="115"/>
    </location>
    <ligand>
        <name>substrate</name>
    </ligand>
</feature>
<feature type="binding site" evidence="1">
    <location>
        <position position="165"/>
    </location>
    <ligand>
        <name>substrate</name>
    </ligand>
</feature>
<feature type="binding site" evidence="1">
    <location>
        <position position="169"/>
    </location>
    <ligand>
        <name>substrate</name>
    </ligand>
</feature>
<feature type="binding site" description="via carbamate group" evidence="1">
    <location>
        <position position="193"/>
    </location>
    <ligand>
        <name>Mg(2+)</name>
        <dbReference type="ChEBI" id="CHEBI:18420"/>
    </ligand>
</feature>
<feature type="binding site" evidence="1">
    <location>
        <position position="195"/>
    </location>
    <ligand>
        <name>Mg(2+)</name>
        <dbReference type="ChEBI" id="CHEBI:18420"/>
    </ligand>
</feature>
<feature type="binding site" evidence="1">
    <location>
        <position position="196"/>
    </location>
    <ligand>
        <name>Mg(2+)</name>
        <dbReference type="ChEBI" id="CHEBI:18420"/>
    </ligand>
</feature>
<feature type="binding site" evidence="1">
    <location>
        <position position="287"/>
    </location>
    <ligand>
        <name>substrate</name>
    </ligand>
</feature>
<feature type="binding site" evidence="1">
    <location>
        <position position="319"/>
    </location>
    <ligand>
        <name>substrate</name>
    </ligand>
</feature>
<feature type="binding site" evidence="1">
    <location>
        <position position="371"/>
    </location>
    <ligand>
        <name>substrate</name>
    </ligand>
</feature>
<feature type="site" description="Transition state stabilizer" evidence="1">
    <location>
        <position position="326"/>
    </location>
</feature>
<feature type="modified residue" description="N6-carboxylysine" evidence="1">
    <location>
        <position position="193"/>
    </location>
</feature>
<sequence>MLKSYQAGVREYRETYWDPHYTPKDSDILAVFKVIPQAGVPREEAAAAVCAESSTATWTTVWTDLLTDLDYYKGRAYAIEDVPGDDEAFYAFVAYPMGLFEEGSIVNVFTSLVGNVFGFKAVRALRLEDVRFPLWFVTTCDGPPHGIQVERDKLDKYGRPMLGCTIKPKLGLSAKNYGRAVYECLRGGLDFTKDDENVNSQPFMRWRDRFEFCQEAIEKAEQETGERKGHYLNVTAPNMEEIYRRAEFAKEIGSPIIMSDYLTIGWAAHSSLSRWCRANGMLLHVHRAMHGVIDRNPRHGINFRVLAKLLRLLGGDHLHSGTVVGKLEGDRAATLGWVDLMRERHVKEDRSRGLFFDQPWGHMAPVMPVASGGIHVWHMPALLAIFGDDAVFQFGGGTLGHPWGNAAGAAANRVALEACVRARNEGRDVEREGKDILTAAAQSSPELKVAMETWREIKFEFDVVDKLDAPHR</sequence>
<name>RBL1A_RHOPS</name>
<organism>
    <name type="scientific">Rhodopseudomonas palustris (strain BisB5)</name>
    <dbReference type="NCBI Taxonomy" id="316057"/>
    <lineage>
        <taxon>Bacteria</taxon>
        <taxon>Pseudomonadati</taxon>
        <taxon>Pseudomonadota</taxon>
        <taxon>Alphaproteobacteria</taxon>
        <taxon>Hyphomicrobiales</taxon>
        <taxon>Nitrobacteraceae</taxon>
        <taxon>Rhodopseudomonas</taxon>
    </lineage>
</organism>
<protein>
    <recommendedName>
        <fullName evidence="1">Ribulose bisphosphate carboxylase large chain 1</fullName>
        <shortName evidence="1">RuBisCO large subunit 1</shortName>
        <ecNumber evidence="1">4.1.1.39</ecNumber>
    </recommendedName>
</protein>
<evidence type="ECO:0000255" key="1">
    <source>
        <dbReference type="HAMAP-Rule" id="MF_01338"/>
    </source>
</evidence>
<comment type="function">
    <text evidence="1">RuBisCO catalyzes two reactions: the carboxylation of D-ribulose 1,5-bisphosphate, the primary event in carbon dioxide fixation, as well as the oxidative fragmentation of the pentose substrate. Both reactions occur simultaneously and in competition at the same active site.</text>
</comment>
<comment type="catalytic activity">
    <reaction evidence="1">
        <text>2 (2R)-3-phosphoglycerate + 2 H(+) = D-ribulose 1,5-bisphosphate + CO2 + H2O</text>
        <dbReference type="Rhea" id="RHEA:23124"/>
        <dbReference type="ChEBI" id="CHEBI:15377"/>
        <dbReference type="ChEBI" id="CHEBI:15378"/>
        <dbReference type="ChEBI" id="CHEBI:16526"/>
        <dbReference type="ChEBI" id="CHEBI:57870"/>
        <dbReference type="ChEBI" id="CHEBI:58272"/>
        <dbReference type="EC" id="4.1.1.39"/>
    </reaction>
</comment>
<comment type="catalytic activity">
    <reaction evidence="1">
        <text>D-ribulose 1,5-bisphosphate + O2 = 2-phosphoglycolate + (2R)-3-phosphoglycerate + 2 H(+)</text>
        <dbReference type="Rhea" id="RHEA:36631"/>
        <dbReference type="ChEBI" id="CHEBI:15378"/>
        <dbReference type="ChEBI" id="CHEBI:15379"/>
        <dbReference type="ChEBI" id="CHEBI:57870"/>
        <dbReference type="ChEBI" id="CHEBI:58033"/>
        <dbReference type="ChEBI" id="CHEBI:58272"/>
    </reaction>
</comment>
<comment type="cofactor">
    <cofactor evidence="1">
        <name>Mg(2+)</name>
        <dbReference type="ChEBI" id="CHEBI:18420"/>
    </cofactor>
    <text evidence="1">Binds 1 Mg(2+) ion per subunit.</text>
</comment>
<comment type="subunit">
    <text evidence="1">Heterohexadecamer of 8 large chains and 8 small chains.</text>
</comment>
<comment type="miscellaneous">
    <text evidence="1">The basic functional RuBisCO is composed of a large chain homodimer in a 'head-to-tail' conformation. In form I RuBisCO this homodimer is arranged in a barrel-like tetramer with the small subunits forming a tetrameric 'cap' on each end of the 'barrel'.</text>
</comment>
<comment type="similarity">
    <text evidence="1">Belongs to the RuBisCO large chain family. Type I subfamily.</text>
</comment>